<dbReference type="EC" id="5.3.1.17" evidence="1"/>
<dbReference type="EMBL" id="CP000243">
    <property type="protein sequence ID" value="ABE08695.1"/>
    <property type="molecule type" value="Genomic_DNA"/>
</dbReference>
<dbReference type="RefSeq" id="WP_000383248.1">
    <property type="nucleotide sequence ID" value="NZ_CP064825.1"/>
</dbReference>
<dbReference type="SMR" id="Q1R7G9"/>
<dbReference type="GeneID" id="75172927"/>
<dbReference type="KEGG" id="eci:UTI89_C3246"/>
<dbReference type="HOGENOM" id="CLU_062609_0_0_6"/>
<dbReference type="UniPathway" id="UPA00545">
    <property type="reaction ID" value="UER00826"/>
</dbReference>
<dbReference type="Proteomes" id="UP000001952">
    <property type="component" value="Chromosome"/>
</dbReference>
<dbReference type="GO" id="GO:0008697">
    <property type="term" value="F:4-deoxy-L-threo-5-hexosulose-uronate ketol-isomerase activity"/>
    <property type="evidence" value="ECO:0007669"/>
    <property type="project" value="UniProtKB-UniRule"/>
</dbReference>
<dbReference type="GO" id="GO:0008270">
    <property type="term" value="F:zinc ion binding"/>
    <property type="evidence" value="ECO:0007669"/>
    <property type="project" value="UniProtKB-UniRule"/>
</dbReference>
<dbReference type="GO" id="GO:0019698">
    <property type="term" value="P:D-galacturonate catabolic process"/>
    <property type="evidence" value="ECO:0007669"/>
    <property type="project" value="TreeGrafter"/>
</dbReference>
<dbReference type="GO" id="GO:0042840">
    <property type="term" value="P:D-glucuronate catabolic process"/>
    <property type="evidence" value="ECO:0007669"/>
    <property type="project" value="TreeGrafter"/>
</dbReference>
<dbReference type="GO" id="GO:0045490">
    <property type="term" value="P:pectin catabolic process"/>
    <property type="evidence" value="ECO:0007669"/>
    <property type="project" value="UniProtKB-UniRule"/>
</dbReference>
<dbReference type="CDD" id="cd20491">
    <property type="entry name" value="cupin_KduI_C"/>
    <property type="match status" value="1"/>
</dbReference>
<dbReference type="CDD" id="cd20294">
    <property type="entry name" value="cupin_KduI_N"/>
    <property type="match status" value="1"/>
</dbReference>
<dbReference type="FunFam" id="2.60.120.10:FF:000018">
    <property type="entry name" value="4-deoxy-L-threo-5-hexosulose-uronate ketol-isomerase"/>
    <property type="match status" value="1"/>
</dbReference>
<dbReference type="FunFam" id="2.60.120.520:FF:000001">
    <property type="entry name" value="4-deoxy-L-threo-5-hexosulose-uronate ketol-isomerase"/>
    <property type="match status" value="1"/>
</dbReference>
<dbReference type="Gene3D" id="2.60.120.10">
    <property type="entry name" value="Jelly Rolls"/>
    <property type="match status" value="1"/>
</dbReference>
<dbReference type="Gene3D" id="2.60.120.520">
    <property type="entry name" value="pectin degrading enzyme 5-keto 4- deoxyuronate isomerase, domain 1"/>
    <property type="match status" value="1"/>
</dbReference>
<dbReference type="HAMAP" id="MF_00687">
    <property type="entry name" value="KduI"/>
    <property type="match status" value="1"/>
</dbReference>
<dbReference type="InterPro" id="IPR007045">
    <property type="entry name" value="KduI"/>
</dbReference>
<dbReference type="InterPro" id="IPR021120">
    <property type="entry name" value="KduI/IolB_isomerase"/>
</dbReference>
<dbReference type="InterPro" id="IPR027449">
    <property type="entry name" value="KduI_N"/>
</dbReference>
<dbReference type="InterPro" id="IPR014710">
    <property type="entry name" value="RmlC-like_jellyroll"/>
</dbReference>
<dbReference type="InterPro" id="IPR011051">
    <property type="entry name" value="RmlC_Cupin_sf"/>
</dbReference>
<dbReference type="NCBIfam" id="NF002091">
    <property type="entry name" value="PRK00924.1"/>
    <property type="match status" value="1"/>
</dbReference>
<dbReference type="PANTHER" id="PTHR38461">
    <property type="entry name" value="4-DEOXY-L-THREO-5-HEXOSULOSE-URONATE KETOL-ISOMERASE"/>
    <property type="match status" value="1"/>
</dbReference>
<dbReference type="PANTHER" id="PTHR38461:SF1">
    <property type="entry name" value="4-DEOXY-L-THREO-5-HEXOSULOSE-URONATE KETOL-ISOMERASE"/>
    <property type="match status" value="1"/>
</dbReference>
<dbReference type="Pfam" id="PF04962">
    <property type="entry name" value="KduI"/>
    <property type="match status" value="1"/>
</dbReference>
<dbReference type="PIRSF" id="PIRSF006625">
    <property type="entry name" value="KduI"/>
    <property type="match status" value="1"/>
</dbReference>
<dbReference type="SUPFAM" id="SSF51182">
    <property type="entry name" value="RmlC-like cupins"/>
    <property type="match status" value="1"/>
</dbReference>
<comment type="function">
    <text evidence="1">Catalyzes the isomerization of 5-dehydro-4-deoxy-D-glucuronate to 3-deoxy-D-glycero-2,5-hexodiulosonate.</text>
</comment>
<comment type="catalytic activity">
    <reaction evidence="1">
        <text>5-dehydro-4-deoxy-D-glucuronate = 3-deoxy-D-glycero-2,5-hexodiulosonate</text>
        <dbReference type="Rhea" id="RHEA:23896"/>
        <dbReference type="ChEBI" id="CHEBI:17117"/>
        <dbReference type="ChEBI" id="CHEBI:29071"/>
        <dbReference type="EC" id="5.3.1.17"/>
    </reaction>
</comment>
<comment type="cofactor">
    <cofactor evidence="1">
        <name>Zn(2+)</name>
        <dbReference type="ChEBI" id="CHEBI:29105"/>
    </cofactor>
    <text evidence="1">Binds 1 zinc ion per subunit.</text>
</comment>
<comment type="pathway">
    <text evidence="1">Glycan metabolism; pectin degradation; 2-dehydro-3-deoxy-D-gluconate from pectin: step 4/5.</text>
</comment>
<comment type="subunit">
    <text evidence="1">Homohexamer.</text>
</comment>
<comment type="similarity">
    <text evidence="1">Belongs to the KduI family.</text>
</comment>
<proteinExistence type="inferred from homology"/>
<accession>Q1R7G9</accession>
<keyword id="KW-0413">Isomerase</keyword>
<keyword id="KW-0479">Metal-binding</keyword>
<keyword id="KW-0862">Zinc</keyword>
<feature type="chain" id="PRO_1000045083" description="4-deoxy-L-threo-5-hexosulose-uronate ketol-isomerase">
    <location>
        <begin position="1"/>
        <end position="278"/>
    </location>
</feature>
<feature type="binding site" evidence="1">
    <location>
        <position position="196"/>
    </location>
    <ligand>
        <name>Zn(2+)</name>
        <dbReference type="ChEBI" id="CHEBI:29105"/>
    </ligand>
</feature>
<feature type="binding site" evidence="1">
    <location>
        <position position="198"/>
    </location>
    <ligand>
        <name>Zn(2+)</name>
        <dbReference type="ChEBI" id="CHEBI:29105"/>
    </ligand>
</feature>
<feature type="binding site" evidence="1">
    <location>
        <position position="203"/>
    </location>
    <ligand>
        <name>Zn(2+)</name>
        <dbReference type="ChEBI" id="CHEBI:29105"/>
    </ligand>
</feature>
<feature type="binding site" evidence="1">
    <location>
        <position position="245"/>
    </location>
    <ligand>
        <name>Zn(2+)</name>
        <dbReference type="ChEBI" id="CHEBI:29105"/>
    </ligand>
</feature>
<organism>
    <name type="scientific">Escherichia coli (strain UTI89 / UPEC)</name>
    <dbReference type="NCBI Taxonomy" id="364106"/>
    <lineage>
        <taxon>Bacteria</taxon>
        <taxon>Pseudomonadati</taxon>
        <taxon>Pseudomonadota</taxon>
        <taxon>Gammaproteobacteria</taxon>
        <taxon>Enterobacterales</taxon>
        <taxon>Enterobacteriaceae</taxon>
        <taxon>Escherichia</taxon>
    </lineage>
</organism>
<reference key="1">
    <citation type="journal article" date="2006" name="Proc. Natl. Acad. Sci. U.S.A.">
        <title>Identification of genes subject to positive selection in uropathogenic strains of Escherichia coli: a comparative genomics approach.</title>
        <authorList>
            <person name="Chen S.L."/>
            <person name="Hung C.-S."/>
            <person name="Xu J."/>
            <person name="Reigstad C.S."/>
            <person name="Magrini V."/>
            <person name="Sabo A."/>
            <person name="Blasiar D."/>
            <person name="Bieri T."/>
            <person name="Meyer R.R."/>
            <person name="Ozersky P."/>
            <person name="Armstrong J.R."/>
            <person name="Fulton R.S."/>
            <person name="Latreille J.P."/>
            <person name="Spieth J."/>
            <person name="Hooton T.M."/>
            <person name="Mardis E.R."/>
            <person name="Hultgren S.J."/>
            <person name="Gordon J.I."/>
        </authorList>
    </citation>
    <scope>NUCLEOTIDE SEQUENCE [LARGE SCALE GENOMIC DNA]</scope>
    <source>
        <strain>UTI89 / UPEC</strain>
    </source>
</reference>
<sequence length="278" mass="31076">MDVRQSIHSAHAKTLDTQGLRNEFLVEKVFVADEYTMVYSHIDRIIVGGIMPVTKTVSVGGEVGKQLGVSYFLERRELGVINIGGAGTITVDGQCYEIGHRDALYVGKGAKEVVFASIDTATPAKFYYNCAPAHTTYPTKKVTPDEVSPVTLGDNLTSNRRTINKYFVPDVLETCQLSMGLTELAPGNLWNTMPCHTHERRMEVYFYFNMDDDACVFHMMGQPQETRHIVMHNEQAVISPSWSIHSGVGTKAYTFIWGMVGENQVFDDMDHVAVKDLR</sequence>
<gene>
    <name evidence="1" type="primary">kduI</name>
    <name type="ordered locus">UTI89_C3246</name>
</gene>
<evidence type="ECO:0000255" key="1">
    <source>
        <dbReference type="HAMAP-Rule" id="MF_00687"/>
    </source>
</evidence>
<protein>
    <recommendedName>
        <fullName evidence="1">4-deoxy-L-threo-5-hexosulose-uronate ketol-isomerase</fullName>
        <ecNumber evidence="1">5.3.1.17</ecNumber>
    </recommendedName>
    <alternativeName>
        <fullName evidence="1">5-keto-4-deoxyuronate isomerase</fullName>
    </alternativeName>
    <alternativeName>
        <fullName evidence="1">DKI isomerase</fullName>
    </alternativeName>
</protein>
<name>KDUI_ECOUT</name>